<gene>
    <name evidence="1" type="primary">leuS</name>
    <name type="ordered locus">UUR10_0380</name>
</gene>
<evidence type="ECO:0000255" key="1">
    <source>
        <dbReference type="HAMAP-Rule" id="MF_00049"/>
    </source>
</evidence>
<protein>
    <recommendedName>
        <fullName evidence="1">Leucine--tRNA ligase</fullName>
        <ecNumber evidence="1">6.1.1.4</ecNumber>
    </recommendedName>
    <alternativeName>
        <fullName evidence="1">Leucyl-tRNA synthetase</fullName>
        <shortName evidence="1">LeuRS</shortName>
    </alternativeName>
</protein>
<comment type="catalytic activity">
    <reaction evidence="1">
        <text>tRNA(Leu) + L-leucine + ATP = L-leucyl-tRNA(Leu) + AMP + diphosphate</text>
        <dbReference type="Rhea" id="RHEA:11688"/>
        <dbReference type="Rhea" id="RHEA-COMP:9613"/>
        <dbReference type="Rhea" id="RHEA-COMP:9622"/>
        <dbReference type="ChEBI" id="CHEBI:30616"/>
        <dbReference type="ChEBI" id="CHEBI:33019"/>
        <dbReference type="ChEBI" id="CHEBI:57427"/>
        <dbReference type="ChEBI" id="CHEBI:78442"/>
        <dbReference type="ChEBI" id="CHEBI:78494"/>
        <dbReference type="ChEBI" id="CHEBI:456215"/>
        <dbReference type="EC" id="6.1.1.4"/>
    </reaction>
</comment>
<comment type="subcellular location">
    <subcellularLocation>
        <location evidence="1">Cytoplasm</location>
    </subcellularLocation>
</comment>
<comment type="similarity">
    <text evidence="1">Belongs to the class-I aminoacyl-tRNA synthetase family.</text>
</comment>
<name>SYL_UREU1</name>
<proteinExistence type="inferred from homology"/>
<organism>
    <name type="scientific">Ureaplasma urealyticum serovar 10 (strain ATCC 33699 / Western)</name>
    <dbReference type="NCBI Taxonomy" id="565575"/>
    <lineage>
        <taxon>Bacteria</taxon>
        <taxon>Bacillati</taxon>
        <taxon>Mycoplasmatota</taxon>
        <taxon>Mycoplasmoidales</taxon>
        <taxon>Mycoplasmoidaceae</taxon>
        <taxon>Ureaplasma</taxon>
    </lineage>
</organism>
<dbReference type="EC" id="6.1.1.4" evidence="1"/>
<dbReference type="EMBL" id="CP001184">
    <property type="protein sequence ID" value="ACI60167.1"/>
    <property type="molecule type" value="Genomic_DNA"/>
</dbReference>
<dbReference type="RefSeq" id="WP_012560305.1">
    <property type="nucleotide sequence ID" value="NC_011374.1"/>
</dbReference>
<dbReference type="SMR" id="B5ZBI3"/>
<dbReference type="STRING" id="565575.UUR10_0380"/>
<dbReference type="KEGG" id="uue:UUR10_0380"/>
<dbReference type="eggNOG" id="COG0495">
    <property type="taxonomic scope" value="Bacteria"/>
</dbReference>
<dbReference type="HOGENOM" id="CLU_004427_0_0_14"/>
<dbReference type="OrthoDB" id="9810365at2"/>
<dbReference type="Proteomes" id="UP000002018">
    <property type="component" value="Chromosome"/>
</dbReference>
<dbReference type="GO" id="GO:0005829">
    <property type="term" value="C:cytosol"/>
    <property type="evidence" value="ECO:0007669"/>
    <property type="project" value="TreeGrafter"/>
</dbReference>
<dbReference type="GO" id="GO:0002161">
    <property type="term" value="F:aminoacyl-tRNA deacylase activity"/>
    <property type="evidence" value="ECO:0007669"/>
    <property type="project" value="InterPro"/>
</dbReference>
<dbReference type="GO" id="GO:0005524">
    <property type="term" value="F:ATP binding"/>
    <property type="evidence" value="ECO:0007669"/>
    <property type="project" value="UniProtKB-UniRule"/>
</dbReference>
<dbReference type="GO" id="GO:0004823">
    <property type="term" value="F:leucine-tRNA ligase activity"/>
    <property type="evidence" value="ECO:0007669"/>
    <property type="project" value="UniProtKB-UniRule"/>
</dbReference>
<dbReference type="GO" id="GO:0006429">
    <property type="term" value="P:leucyl-tRNA aminoacylation"/>
    <property type="evidence" value="ECO:0007669"/>
    <property type="project" value="UniProtKB-UniRule"/>
</dbReference>
<dbReference type="CDD" id="cd07958">
    <property type="entry name" value="Anticodon_Ia_Leu_BEm"/>
    <property type="match status" value="1"/>
</dbReference>
<dbReference type="CDD" id="cd00812">
    <property type="entry name" value="LeuRS_core"/>
    <property type="match status" value="1"/>
</dbReference>
<dbReference type="FunFam" id="1.10.730.10:FF:000002">
    <property type="entry name" value="Leucine--tRNA ligase"/>
    <property type="match status" value="1"/>
</dbReference>
<dbReference type="FunFam" id="3.40.50.620:FF:000056">
    <property type="entry name" value="Leucine--tRNA ligase"/>
    <property type="match status" value="1"/>
</dbReference>
<dbReference type="FunFam" id="3.40.50.620:FF:000077">
    <property type="entry name" value="Leucine--tRNA ligase"/>
    <property type="match status" value="1"/>
</dbReference>
<dbReference type="Gene3D" id="3.10.20.590">
    <property type="match status" value="1"/>
</dbReference>
<dbReference type="Gene3D" id="3.40.50.620">
    <property type="entry name" value="HUPs"/>
    <property type="match status" value="2"/>
</dbReference>
<dbReference type="Gene3D" id="1.10.730.10">
    <property type="entry name" value="Isoleucyl-tRNA Synthetase, Domain 1"/>
    <property type="match status" value="1"/>
</dbReference>
<dbReference type="HAMAP" id="MF_00049_B">
    <property type="entry name" value="Leu_tRNA_synth_B"/>
    <property type="match status" value="1"/>
</dbReference>
<dbReference type="InterPro" id="IPR001412">
    <property type="entry name" value="aa-tRNA-synth_I_CS"/>
</dbReference>
<dbReference type="InterPro" id="IPR002302">
    <property type="entry name" value="Leu-tRNA-ligase"/>
</dbReference>
<dbReference type="InterPro" id="IPR025709">
    <property type="entry name" value="Leu_tRNA-synth_edit"/>
</dbReference>
<dbReference type="InterPro" id="IPR013155">
    <property type="entry name" value="M/V/L/I-tRNA-synth_anticd-bd"/>
</dbReference>
<dbReference type="InterPro" id="IPR015413">
    <property type="entry name" value="Methionyl/Leucyl_tRNA_Synth"/>
</dbReference>
<dbReference type="InterPro" id="IPR014729">
    <property type="entry name" value="Rossmann-like_a/b/a_fold"/>
</dbReference>
<dbReference type="InterPro" id="IPR009080">
    <property type="entry name" value="tRNAsynth_Ia_anticodon-bd"/>
</dbReference>
<dbReference type="InterPro" id="IPR009008">
    <property type="entry name" value="Val/Leu/Ile-tRNA-synth_edit"/>
</dbReference>
<dbReference type="NCBIfam" id="TIGR00396">
    <property type="entry name" value="leuS_bact"/>
    <property type="match status" value="1"/>
</dbReference>
<dbReference type="PANTHER" id="PTHR43740:SF2">
    <property type="entry name" value="LEUCINE--TRNA LIGASE, MITOCHONDRIAL"/>
    <property type="match status" value="1"/>
</dbReference>
<dbReference type="PANTHER" id="PTHR43740">
    <property type="entry name" value="LEUCYL-TRNA SYNTHETASE"/>
    <property type="match status" value="1"/>
</dbReference>
<dbReference type="Pfam" id="PF08264">
    <property type="entry name" value="Anticodon_1"/>
    <property type="match status" value="1"/>
</dbReference>
<dbReference type="Pfam" id="PF13603">
    <property type="entry name" value="tRNA-synt_1_2"/>
    <property type="match status" value="1"/>
</dbReference>
<dbReference type="Pfam" id="PF09334">
    <property type="entry name" value="tRNA-synt_1g"/>
    <property type="match status" value="2"/>
</dbReference>
<dbReference type="PRINTS" id="PR00985">
    <property type="entry name" value="TRNASYNTHLEU"/>
</dbReference>
<dbReference type="SUPFAM" id="SSF47323">
    <property type="entry name" value="Anticodon-binding domain of a subclass of class I aminoacyl-tRNA synthetases"/>
    <property type="match status" value="1"/>
</dbReference>
<dbReference type="SUPFAM" id="SSF52374">
    <property type="entry name" value="Nucleotidylyl transferase"/>
    <property type="match status" value="1"/>
</dbReference>
<dbReference type="SUPFAM" id="SSF50677">
    <property type="entry name" value="ValRS/IleRS/LeuRS editing domain"/>
    <property type="match status" value="1"/>
</dbReference>
<dbReference type="PROSITE" id="PS00178">
    <property type="entry name" value="AA_TRNA_LIGASE_I"/>
    <property type="match status" value="1"/>
</dbReference>
<accession>B5ZBI3</accession>
<reference key="1">
    <citation type="submission" date="2008-10" db="EMBL/GenBank/DDBJ databases">
        <title>Genome sequence of Ureaplasma urealyticum serovar 10 ATCC-33699.</title>
        <authorList>
            <person name="Shrivastava S."/>
            <person name="Methe B.A."/>
            <person name="Glass J."/>
            <person name="White K."/>
            <person name="Duffy L.B."/>
        </authorList>
    </citation>
    <scope>NUCLEOTIDE SEQUENCE [LARGE SCALE GENOMIC DNA]</scope>
    <source>
        <strain>ATCC 33699 / Western</strain>
    </source>
</reference>
<feature type="chain" id="PRO_1000091376" description="Leucine--tRNA ligase">
    <location>
        <begin position="1"/>
        <end position="806"/>
    </location>
</feature>
<feature type="short sequence motif" description="'HIGH' region">
    <location>
        <begin position="40"/>
        <end position="51"/>
    </location>
</feature>
<feature type="short sequence motif" description="'KMSKS' region">
    <location>
        <begin position="580"/>
        <end position="584"/>
    </location>
</feature>
<feature type="binding site" evidence="1">
    <location>
        <position position="583"/>
    </location>
    <ligand>
        <name>ATP</name>
        <dbReference type="ChEBI" id="CHEBI:30616"/>
    </ligand>
</feature>
<keyword id="KW-0030">Aminoacyl-tRNA synthetase</keyword>
<keyword id="KW-0067">ATP-binding</keyword>
<keyword id="KW-0963">Cytoplasm</keyword>
<keyword id="KW-0436">Ligase</keyword>
<keyword id="KW-0547">Nucleotide-binding</keyword>
<keyword id="KW-0648">Protein biosynthesis</keyword>
<sequence length="806" mass="93235">MYNHNKIEKKWQKYWLDNKTFKFVDNPNNPKKFYVLDMFPYPSGKGLHVGHPKGYTATDVISRFKRLNGYDVLHPIGWDAFGLPAEQYALETNNHPHTFTQQNIKIFRKQLQMIGFDFDYDKEVDTTDPQFYQWTQWIFVQLYKHNLAEIQDIDVNWCENLGTVLSNEEVVLNDKNERVSERGGHPVVRKPMKQWVLKIVDYADKLLDGLNEVEFSESLKSLQRNWIGKSIGTNVQFKIKDSHLALDVFTTRIDTIYGAQYLVVAPEHPILKSIVSEQQASVVQAYVDQTKKISDLDRIADTNKTGVFSGTYAINPINQEIIPIWVSDYVLMNFATGAVMGVPAHDERDYAFAKKYDLPIKSVIDTKQSLPYTGDGLHINSPMINGLNIEQSQNILNDYLVKNHLAKRVVNYKLRNWIFSRQRYWGEPFPVLFDENNQIKIIEDLPVLLPNLDEFKPSKTGESPLANAQEWLYVEIDGKKYRRETNTMPQWAGSSWYFLAYILKNEDGSYTPLNSEEAKKRFAKWLPVDVYIGGQEHAVLHLLYARFWHRFLYDIGVVPTKEPFYKVINQGMILGENNEKMSKSKGNVINPDDIIASHGADTLRIYEMFMGPLTASLPWSPDGLDAMRKWLDRVYRLYHNLSELEVVEDVNKLNEEIIITYHTLIKNYTKAINEQAFNIAISEMMVFVNVLYKNKVINYKLLDNFLILLSCFAPHLAEELYSLNHSESVCLQKMPIYDEQKIIAQNVTIPIQINGKLKHTINVLRDTNAEQLINLALACEQVKQAIGDQPIKKQIVVVNKIINFVI</sequence>